<dbReference type="EC" id="2.1.2.11" evidence="1"/>
<dbReference type="EMBL" id="CP000077">
    <property type="protein sequence ID" value="AAY80310.1"/>
    <property type="molecule type" value="Genomic_DNA"/>
</dbReference>
<dbReference type="RefSeq" id="WP_011277812.1">
    <property type="nucleotide sequence ID" value="NC_007181.1"/>
</dbReference>
<dbReference type="SMR" id="Q4JA70"/>
<dbReference type="STRING" id="330779.Saci_0948"/>
<dbReference type="GeneID" id="14551459"/>
<dbReference type="GeneID" id="78441295"/>
<dbReference type="KEGG" id="sai:Saci_0948"/>
<dbReference type="PATRIC" id="fig|330779.12.peg.909"/>
<dbReference type="eggNOG" id="arCOG00584">
    <property type="taxonomic scope" value="Archaea"/>
</dbReference>
<dbReference type="HOGENOM" id="CLU_036645_1_0_2"/>
<dbReference type="UniPathway" id="UPA00241"/>
<dbReference type="Proteomes" id="UP000001018">
    <property type="component" value="Chromosome"/>
</dbReference>
<dbReference type="GO" id="GO:0005737">
    <property type="term" value="C:cytoplasm"/>
    <property type="evidence" value="ECO:0007669"/>
    <property type="project" value="UniProtKB-SubCell"/>
</dbReference>
<dbReference type="GO" id="GO:0003864">
    <property type="term" value="F:3-methyl-2-oxobutanoate hydroxymethyltransferase activity"/>
    <property type="evidence" value="ECO:0007669"/>
    <property type="project" value="UniProtKB-UniRule"/>
</dbReference>
<dbReference type="GO" id="GO:0000287">
    <property type="term" value="F:magnesium ion binding"/>
    <property type="evidence" value="ECO:0007669"/>
    <property type="project" value="TreeGrafter"/>
</dbReference>
<dbReference type="GO" id="GO:0015937">
    <property type="term" value="P:coenzyme A biosynthetic process"/>
    <property type="evidence" value="ECO:0007669"/>
    <property type="project" value="UniProtKB-UniRule"/>
</dbReference>
<dbReference type="GO" id="GO:0015940">
    <property type="term" value="P:pantothenate biosynthetic process"/>
    <property type="evidence" value="ECO:0007669"/>
    <property type="project" value="InterPro"/>
</dbReference>
<dbReference type="CDD" id="cd06557">
    <property type="entry name" value="KPHMT-like"/>
    <property type="match status" value="1"/>
</dbReference>
<dbReference type="FunFam" id="3.20.20.60:FF:000003">
    <property type="entry name" value="3-methyl-2-oxobutanoate hydroxymethyltransferase"/>
    <property type="match status" value="1"/>
</dbReference>
<dbReference type="Gene3D" id="3.20.20.60">
    <property type="entry name" value="Phosphoenolpyruvate-binding domains"/>
    <property type="match status" value="1"/>
</dbReference>
<dbReference type="HAMAP" id="MF_00156">
    <property type="entry name" value="PanB"/>
    <property type="match status" value="1"/>
</dbReference>
<dbReference type="InterPro" id="IPR003700">
    <property type="entry name" value="Pantoate_hydroxy_MeTrfase"/>
</dbReference>
<dbReference type="InterPro" id="IPR015813">
    <property type="entry name" value="Pyrv/PenolPyrv_kinase-like_dom"/>
</dbReference>
<dbReference type="InterPro" id="IPR040442">
    <property type="entry name" value="Pyrv_kinase-like_dom_sf"/>
</dbReference>
<dbReference type="NCBIfam" id="TIGR00222">
    <property type="entry name" value="panB"/>
    <property type="match status" value="1"/>
</dbReference>
<dbReference type="NCBIfam" id="NF001452">
    <property type="entry name" value="PRK00311.1"/>
    <property type="match status" value="1"/>
</dbReference>
<dbReference type="PANTHER" id="PTHR20881">
    <property type="entry name" value="3-METHYL-2-OXOBUTANOATE HYDROXYMETHYLTRANSFERASE"/>
    <property type="match status" value="1"/>
</dbReference>
<dbReference type="PANTHER" id="PTHR20881:SF0">
    <property type="entry name" value="3-METHYL-2-OXOBUTANOATE HYDROXYMETHYLTRANSFERASE"/>
    <property type="match status" value="1"/>
</dbReference>
<dbReference type="Pfam" id="PF02548">
    <property type="entry name" value="Pantoate_transf"/>
    <property type="match status" value="1"/>
</dbReference>
<dbReference type="PIRSF" id="PIRSF000388">
    <property type="entry name" value="Pantoate_hydroxy_MeTrfase"/>
    <property type="match status" value="1"/>
</dbReference>
<dbReference type="SUPFAM" id="SSF51621">
    <property type="entry name" value="Phosphoenolpyruvate/pyruvate domain"/>
    <property type="match status" value="1"/>
</dbReference>
<reference key="1">
    <citation type="journal article" date="2005" name="J. Bacteriol.">
        <title>The genome of Sulfolobus acidocaldarius, a model organism of the Crenarchaeota.</title>
        <authorList>
            <person name="Chen L."/>
            <person name="Bruegger K."/>
            <person name="Skovgaard M."/>
            <person name="Redder P."/>
            <person name="She Q."/>
            <person name="Torarinsson E."/>
            <person name="Greve B."/>
            <person name="Awayez M."/>
            <person name="Zibat A."/>
            <person name="Klenk H.-P."/>
            <person name="Garrett R.A."/>
        </authorList>
    </citation>
    <scope>NUCLEOTIDE SEQUENCE [LARGE SCALE GENOMIC DNA]</scope>
    <source>
        <strain>ATCC 33909 / DSM 639 / JCM 8929 / NBRC 15157 / NCIMB 11770</strain>
    </source>
</reference>
<proteinExistence type="inferred from homology"/>
<accession>Q4JA70</accession>
<gene>
    <name evidence="1" type="primary">panB</name>
    <name type="ordered locus">Saci_0948</name>
</gene>
<organism>
    <name type="scientific">Sulfolobus acidocaldarius (strain ATCC 33909 / DSM 639 / JCM 8929 / NBRC 15157 / NCIMB 11770)</name>
    <dbReference type="NCBI Taxonomy" id="330779"/>
    <lineage>
        <taxon>Archaea</taxon>
        <taxon>Thermoproteota</taxon>
        <taxon>Thermoprotei</taxon>
        <taxon>Sulfolobales</taxon>
        <taxon>Sulfolobaceae</taxon>
        <taxon>Sulfolobus</taxon>
    </lineage>
</organism>
<keyword id="KW-0173">Coenzyme A biosynthesis</keyword>
<keyword id="KW-0963">Cytoplasm</keyword>
<keyword id="KW-0460">Magnesium</keyword>
<keyword id="KW-0479">Metal-binding</keyword>
<keyword id="KW-1185">Reference proteome</keyword>
<keyword id="KW-0808">Transferase</keyword>
<protein>
    <recommendedName>
        <fullName evidence="1">3-methyl-2-oxobutanoate hydroxymethyltransferase</fullName>
        <ecNumber evidence="1">2.1.2.11</ecNumber>
    </recommendedName>
    <alternativeName>
        <fullName evidence="1">Ketopantoate hydroxymethyltransferase</fullName>
        <shortName evidence="1">KPHMT</shortName>
    </alternativeName>
</protein>
<sequence length="268" mass="29774">MSAGKVSIRDFLKKKGKEKITMLTAYDYPTAKIMSMTNLDGILVGDSLSMVVLGYENTLKVSMKEMLVHLDSVVRAKPRQLVVADMPFLSYEVSANTAVKNAGLFVRHGADSVKLEGGEEMADVVRKIVRAGIPVMGHIGLTPQRFLRIGGFRVLGKSKHEEEQLLRDAEVLEEAGIFSLVIENTYADVAKKITEKLKVPTICIGAGPYCDGQILVIHDVLGLSEFTPYFAKAYVNLKEEIQKAVNKYVEEVRESKFPQGENYKERES</sequence>
<comment type="function">
    <text evidence="1">Catalyzes the reversible reaction in which hydroxymethyl group from 5,10-methylenetetrahydrofolate is transferred onto alpha-ketoisovalerate to form ketopantoate.</text>
</comment>
<comment type="catalytic activity">
    <reaction evidence="1">
        <text>3-methyl-2-oxobutanoate + (6R)-5,10-methylene-5,6,7,8-tetrahydrofolate + H2O = 2-dehydropantoate + (6S)-5,6,7,8-tetrahydrofolate</text>
        <dbReference type="Rhea" id="RHEA:11824"/>
        <dbReference type="ChEBI" id="CHEBI:11561"/>
        <dbReference type="ChEBI" id="CHEBI:11851"/>
        <dbReference type="ChEBI" id="CHEBI:15377"/>
        <dbReference type="ChEBI" id="CHEBI:15636"/>
        <dbReference type="ChEBI" id="CHEBI:57453"/>
        <dbReference type="EC" id="2.1.2.11"/>
    </reaction>
</comment>
<comment type="cofactor">
    <cofactor evidence="1">
        <name>Mg(2+)</name>
        <dbReference type="ChEBI" id="CHEBI:18420"/>
    </cofactor>
    <text evidence="1">Binds 1 Mg(2+) ion per subunit.</text>
</comment>
<comment type="pathway">
    <text evidence="1">Cofactor biosynthesis; coenzyme A biosynthesis.</text>
</comment>
<comment type="subunit">
    <text evidence="1">Homodecamer; pentamer of dimers.</text>
</comment>
<comment type="subcellular location">
    <subcellularLocation>
        <location evidence="1">Cytoplasm</location>
    </subcellularLocation>
</comment>
<comment type="similarity">
    <text evidence="1">Belongs to the PanB family.</text>
</comment>
<name>PANB_SULAC</name>
<evidence type="ECO:0000255" key="1">
    <source>
        <dbReference type="HAMAP-Rule" id="MF_00156"/>
    </source>
</evidence>
<feature type="chain" id="PRO_0000184922" description="3-methyl-2-oxobutanoate hydroxymethyltransferase">
    <location>
        <begin position="1"/>
        <end position="268"/>
    </location>
</feature>
<feature type="active site" description="Proton acceptor" evidence="1">
    <location>
        <position position="183"/>
    </location>
</feature>
<feature type="binding site" evidence="1">
    <location>
        <begin position="46"/>
        <end position="47"/>
    </location>
    <ligand>
        <name>3-methyl-2-oxobutanoate</name>
        <dbReference type="ChEBI" id="CHEBI:11851"/>
    </ligand>
</feature>
<feature type="binding site" evidence="1">
    <location>
        <position position="46"/>
    </location>
    <ligand>
        <name>Mg(2+)</name>
        <dbReference type="ChEBI" id="CHEBI:18420"/>
    </ligand>
</feature>
<feature type="binding site" evidence="1">
    <location>
        <position position="85"/>
    </location>
    <ligand>
        <name>3-methyl-2-oxobutanoate</name>
        <dbReference type="ChEBI" id="CHEBI:11851"/>
    </ligand>
</feature>
<feature type="binding site" evidence="1">
    <location>
        <position position="85"/>
    </location>
    <ligand>
        <name>Mg(2+)</name>
        <dbReference type="ChEBI" id="CHEBI:18420"/>
    </ligand>
</feature>
<feature type="binding site" evidence="1">
    <location>
        <position position="114"/>
    </location>
    <ligand>
        <name>3-methyl-2-oxobutanoate</name>
        <dbReference type="ChEBI" id="CHEBI:11851"/>
    </ligand>
</feature>
<feature type="binding site" evidence="1">
    <location>
        <position position="116"/>
    </location>
    <ligand>
        <name>Mg(2+)</name>
        <dbReference type="ChEBI" id="CHEBI:18420"/>
    </ligand>
</feature>